<accession>Q9LDE3</accession>
<accession>Q8LGH1</accession>
<feature type="chain" id="PRO_0000283175" description="F-box/kelch-repeat protein At1g23390">
    <location>
        <begin position="1"/>
        <end position="394"/>
    </location>
</feature>
<feature type="domain" description="F-box">
    <location>
        <begin position="15"/>
        <end position="62"/>
    </location>
</feature>
<feature type="repeat" description="Kelch 1">
    <location>
        <begin position="65"/>
        <end position="111"/>
    </location>
</feature>
<feature type="repeat" description="Kelch 2">
    <location>
        <begin position="155"/>
        <end position="204"/>
    </location>
</feature>
<feature type="repeat" description="Kelch 3">
    <location>
        <begin position="206"/>
        <end position="252"/>
    </location>
</feature>
<feature type="repeat" description="Kelch 4">
    <location>
        <begin position="321"/>
        <end position="369"/>
    </location>
</feature>
<feature type="sequence conflict" description="In Ref. 4; AAM67270." evidence="1" ref="4">
    <original>ES</original>
    <variation>QR</variation>
    <location>
        <begin position="17"/>
        <end position="18"/>
    </location>
</feature>
<feature type="sequence conflict" description="In Ref. 4; AAM67270." evidence="1" ref="4">
    <original>C</original>
    <variation>S</variation>
    <location>
        <position position="41"/>
    </location>
</feature>
<feature type="sequence conflict" description="In Ref. 4; AAM67270." evidence="1" ref="4">
    <original>N</original>
    <variation>K</variation>
    <location>
        <position position="95"/>
    </location>
</feature>
<feature type="sequence conflict" description="In Ref. 4; AAM67270." evidence="1" ref="4">
    <original>A</original>
    <variation>S</variation>
    <location>
        <position position="138"/>
    </location>
</feature>
<feature type="sequence conflict" description="In Ref. 4; AAM67270." evidence="1" ref="4">
    <original>G</original>
    <variation>W</variation>
    <location>
        <position position="261"/>
    </location>
</feature>
<gene>
    <name type="ordered locus">At1g23390</name>
    <name type="ORF">F26F24.26</name>
    <name type="ORF">F28C11.3</name>
</gene>
<evidence type="ECO:0000305" key="1"/>
<name>FBK9_ARATH</name>
<protein>
    <recommendedName>
        <fullName>F-box/kelch-repeat protein At1g23390</fullName>
    </recommendedName>
</protein>
<organism>
    <name type="scientific">Arabidopsis thaliana</name>
    <name type="common">Mouse-ear cress</name>
    <dbReference type="NCBI Taxonomy" id="3702"/>
    <lineage>
        <taxon>Eukaryota</taxon>
        <taxon>Viridiplantae</taxon>
        <taxon>Streptophyta</taxon>
        <taxon>Embryophyta</taxon>
        <taxon>Tracheophyta</taxon>
        <taxon>Spermatophyta</taxon>
        <taxon>Magnoliopsida</taxon>
        <taxon>eudicotyledons</taxon>
        <taxon>Gunneridae</taxon>
        <taxon>Pentapetalae</taxon>
        <taxon>rosids</taxon>
        <taxon>malvids</taxon>
        <taxon>Brassicales</taxon>
        <taxon>Brassicaceae</taxon>
        <taxon>Camelineae</taxon>
        <taxon>Arabidopsis</taxon>
    </lineage>
</organism>
<proteinExistence type="evidence at transcript level"/>
<dbReference type="EMBL" id="AC005292">
    <property type="protein sequence ID" value="AAF87006.1"/>
    <property type="molecule type" value="Genomic_DNA"/>
</dbReference>
<dbReference type="EMBL" id="AC007945">
    <property type="protein sequence ID" value="AAF79597.1"/>
    <property type="molecule type" value="Genomic_DNA"/>
</dbReference>
<dbReference type="EMBL" id="CP002684">
    <property type="protein sequence ID" value="AEE30382.1"/>
    <property type="molecule type" value="Genomic_DNA"/>
</dbReference>
<dbReference type="EMBL" id="AY120706">
    <property type="protein sequence ID" value="AAM53264.1"/>
    <property type="molecule type" value="mRNA"/>
</dbReference>
<dbReference type="EMBL" id="BT000026">
    <property type="protein sequence ID" value="AAN15345.1"/>
    <property type="molecule type" value="mRNA"/>
</dbReference>
<dbReference type="EMBL" id="AY084270">
    <property type="protein sequence ID" value="AAM67270.1"/>
    <property type="molecule type" value="mRNA"/>
</dbReference>
<dbReference type="PIR" id="G86367">
    <property type="entry name" value="G86367"/>
</dbReference>
<dbReference type="RefSeq" id="NP_564193.1">
    <property type="nucleotide sequence ID" value="NM_102188.3"/>
</dbReference>
<dbReference type="BioGRID" id="24186">
    <property type="interactions" value="14"/>
</dbReference>
<dbReference type="FunCoup" id="Q9LDE3">
    <property type="interactions" value="788"/>
</dbReference>
<dbReference type="IntAct" id="Q9LDE3">
    <property type="interactions" value="2"/>
</dbReference>
<dbReference type="STRING" id="3702.Q9LDE3"/>
<dbReference type="PaxDb" id="3702-AT1G23390.1"/>
<dbReference type="ProteomicsDB" id="230695"/>
<dbReference type="EnsemblPlants" id="AT1G23390.1">
    <property type="protein sequence ID" value="AT1G23390.1"/>
    <property type="gene ID" value="AT1G23390"/>
</dbReference>
<dbReference type="GeneID" id="838947"/>
<dbReference type="Gramene" id="AT1G23390.1">
    <property type="protein sequence ID" value="AT1G23390.1"/>
    <property type="gene ID" value="AT1G23390"/>
</dbReference>
<dbReference type="KEGG" id="ath:AT1G23390"/>
<dbReference type="Araport" id="AT1G23390"/>
<dbReference type="TAIR" id="AT1G23390">
    <property type="gene designation" value="KFB"/>
</dbReference>
<dbReference type="eggNOG" id="ENOG502RB6E">
    <property type="taxonomic scope" value="Eukaryota"/>
</dbReference>
<dbReference type="HOGENOM" id="CLU_057602_1_0_1"/>
<dbReference type="InParanoid" id="Q9LDE3"/>
<dbReference type="OMA" id="WIELRTG"/>
<dbReference type="PhylomeDB" id="Q9LDE3"/>
<dbReference type="PRO" id="PR:Q9LDE3"/>
<dbReference type="Proteomes" id="UP000006548">
    <property type="component" value="Chromosome 1"/>
</dbReference>
<dbReference type="ExpressionAtlas" id="Q9LDE3">
    <property type="expression patterns" value="baseline and differential"/>
</dbReference>
<dbReference type="GO" id="GO:0005737">
    <property type="term" value="C:cytoplasm"/>
    <property type="evidence" value="ECO:0000314"/>
    <property type="project" value="TAIR"/>
</dbReference>
<dbReference type="GO" id="GO:0005829">
    <property type="term" value="C:cytosol"/>
    <property type="evidence" value="ECO:0000314"/>
    <property type="project" value="TAIR"/>
</dbReference>
<dbReference type="GO" id="GO:0005634">
    <property type="term" value="C:nucleus"/>
    <property type="evidence" value="ECO:0000314"/>
    <property type="project" value="TAIR"/>
</dbReference>
<dbReference type="GO" id="GO:0043161">
    <property type="term" value="P:proteasome-mediated ubiquitin-dependent protein catabolic process"/>
    <property type="evidence" value="ECO:0000315"/>
    <property type="project" value="TAIR"/>
</dbReference>
<dbReference type="CDD" id="cd09917">
    <property type="entry name" value="F-box_SF"/>
    <property type="match status" value="1"/>
</dbReference>
<dbReference type="Gene3D" id="1.20.1280.50">
    <property type="match status" value="1"/>
</dbReference>
<dbReference type="Gene3D" id="2.120.10.80">
    <property type="entry name" value="Kelch-type beta propeller"/>
    <property type="match status" value="1"/>
</dbReference>
<dbReference type="InterPro" id="IPR036047">
    <property type="entry name" value="F-box-like_dom_sf"/>
</dbReference>
<dbReference type="InterPro" id="IPR050354">
    <property type="entry name" value="F-box/kelch-repeat_ARATH"/>
</dbReference>
<dbReference type="InterPro" id="IPR001810">
    <property type="entry name" value="F-box_dom"/>
</dbReference>
<dbReference type="InterPro" id="IPR015915">
    <property type="entry name" value="Kelch-typ_b-propeller"/>
</dbReference>
<dbReference type="PANTHER" id="PTHR24414:SF44">
    <property type="entry name" value="F-BOX DOMAIN-CONTAINING PROTEIN"/>
    <property type="match status" value="1"/>
</dbReference>
<dbReference type="PANTHER" id="PTHR24414">
    <property type="entry name" value="F-BOX/KELCH-REPEAT PROTEIN SKIP4"/>
    <property type="match status" value="1"/>
</dbReference>
<dbReference type="Pfam" id="PF12937">
    <property type="entry name" value="F-box-like"/>
    <property type="match status" value="1"/>
</dbReference>
<dbReference type="SMART" id="SM00256">
    <property type="entry name" value="FBOX"/>
    <property type="match status" value="1"/>
</dbReference>
<dbReference type="SUPFAM" id="SSF81383">
    <property type="entry name" value="F-box domain"/>
    <property type="match status" value="1"/>
</dbReference>
<dbReference type="SUPFAM" id="SSF117281">
    <property type="entry name" value="Kelch motif"/>
    <property type="match status" value="1"/>
</dbReference>
<reference key="1">
    <citation type="journal article" date="2000" name="Nature">
        <title>Sequence and analysis of chromosome 1 of the plant Arabidopsis thaliana.</title>
        <authorList>
            <person name="Theologis A."/>
            <person name="Ecker J.R."/>
            <person name="Palm C.J."/>
            <person name="Federspiel N.A."/>
            <person name="Kaul S."/>
            <person name="White O."/>
            <person name="Alonso J."/>
            <person name="Altafi H."/>
            <person name="Araujo R."/>
            <person name="Bowman C.L."/>
            <person name="Brooks S.Y."/>
            <person name="Buehler E."/>
            <person name="Chan A."/>
            <person name="Chao Q."/>
            <person name="Chen H."/>
            <person name="Cheuk R.F."/>
            <person name="Chin C.W."/>
            <person name="Chung M.K."/>
            <person name="Conn L."/>
            <person name="Conway A.B."/>
            <person name="Conway A.R."/>
            <person name="Creasy T.H."/>
            <person name="Dewar K."/>
            <person name="Dunn P."/>
            <person name="Etgu P."/>
            <person name="Feldblyum T.V."/>
            <person name="Feng J.-D."/>
            <person name="Fong B."/>
            <person name="Fujii C.Y."/>
            <person name="Gill J.E."/>
            <person name="Goldsmith A.D."/>
            <person name="Haas B."/>
            <person name="Hansen N.F."/>
            <person name="Hughes B."/>
            <person name="Huizar L."/>
            <person name="Hunter J.L."/>
            <person name="Jenkins J."/>
            <person name="Johnson-Hopson C."/>
            <person name="Khan S."/>
            <person name="Khaykin E."/>
            <person name="Kim C.J."/>
            <person name="Koo H.L."/>
            <person name="Kremenetskaia I."/>
            <person name="Kurtz D.B."/>
            <person name="Kwan A."/>
            <person name="Lam B."/>
            <person name="Langin-Hooper S."/>
            <person name="Lee A."/>
            <person name="Lee J.M."/>
            <person name="Lenz C.A."/>
            <person name="Li J.H."/>
            <person name="Li Y.-P."/>
            <person name="Lin X."/>
            <person name="Liu S.X."/>
            <person name="Liu Z.A."/>
            <person name="Luros J.S."/>
            <person name="Maiti R."/>
            <person name="Marziali A."/>
            <person name="Militscher J."/>
            <person name="Miranda M."/>
            <person name="Nguyen M."/>
            <person name="Nierman W.C."/>
            <person name="Osborne B.I."/>
            <person name="Pai G."/>
            <person name="Peterson J."/>
            <person name="Pham P.K."/>
            <person name="Rizzo M."/>
            <person name="Rooney T."/>
            <person name="Rowley D."/>
            <person name="Sakano H."/>
            <person name="Salzberg S.L."/>
            <person name="Schwartz J.R."/>
            <person name="Shinn P."/>
            <person name="Southwick A.M."/>
            <person name="Sun H."/>
            <person name="Tallon L.J."/>
            <person name="Tambunga G."/>
            <person name="Toriumi M.J."/>
            <person name="Town C.D."/>
            <person name="Utterback T."/>
            <person name="Van Aken S."/>
            <person name="Vaysberg M."/>
            <person name="Vysotskaia V.S."/>
            <person name="Walker M."/>
            <person name="Wu D."/>
            <person name="Yu G."/>
            <person name="Fraser C.M."/>
            <person name="Venter J.C."/>
            <person name="Davis R.W."/>
        </authorList>
    </citation>
    <scope>NUCLEOTIDE SEQUENCE [LARGE SCALE GENOMIC DNA]</scope>
    <source>
        <strain>cv. Columbia</strain>
    </source>
</reference>
<reference key="2">
    <citation type="journal article" date="2017" name="Plant J.">
        <title>Araport11: a complete reannotation of the Arabidopsis thaliana reference genome.</title>
        <authorList>
            <person name="Cheng C.Y."/>
            <person name="Krishnakumar V."/>
            <person name="Chan A.P."/>
            <person name="Thibaud-Nissen F."/>
            <person name="Schobel S."/>
            <person name="Town C.D."/>
        </authorList>
    </citation>
    <scope>GENOME REANNOTATION</scope>
    <source>
        <strain>cv. Columbia</strain>
    </source>
</reference>
<reference key="3">
    <citation type="journal article" date="2003" name="Science">
        <title>Empirical analysis of transcriptional activity in the Arabidopsis genome.</title>
        <authorList>
            <person name="Yamada K."/>
            <person name="Lim J."/>
            <person name="Dale J.M."/>
            <person name="Chen H."/>
            <person name="Shinn P."/>
            <person name="Palm C.J."/>
            <person name="Southwick A.M."/>
            <person name="Wu H.C."/>
            <person name="Kim C.J."/>
            <person name="Nguyen M."/>
            <person name="Pham P.K."/>
            <person name="Cheuk R.F."/>
            <person name="Karlin-Newmann G."/>
            <person name="Liu S.X."/>
            <person name="Lam B."/>
            <person name="Sakano H."/>
            <person name="Wu T."/>
            <person name="Yu G."/>
            <person name="Miranda M."/>
            <person name="Quach H.L."/>
            <person name="Tripp M."/>
            <person name="Chang C.H."/>
            <person name="Lee J.M."/>
            <person name="Toriumi M.J."/>
            <person name="Chan M.M."/>
            <person name="Tang C.C."/>
            <person name="Onodera C.S."/>
            <person name="Deng J.M."/>
            <person name="Akiyama K."/>
            <person name="Ansari Y."/>
            <person name="Arakawa T."/>
            <person name="Banh J."/>
            <person name="Banno F."/>
            <person name="Bowser L."/>
            <person name="Brooks S.Y."/>
            <person name="Carninci P."/>
            <person name="Chao Q."/>
            <person name="Choy N."/>
            <person name="Enju A."/>
            <person name="Goldsmith A.D."/>
            <person name="Gurjal M."/>
            <person name="Hansen N.F."/>
            <person name="Hayashizaki Y."/>
            <person name="Johnson-Hopson C."/>
            <person name="Hsuan V.W."/>
            <person name="Iida K."/>
            <person name="Karnes M."/>
            <person name="Khan S."/>
            <person name="Koesema E."/>
            <person name="Ishida J."/>
            <person name="Jiang P.X."/>
            <person name="Jones T."/>
            <person name="Kawai J."/>
            <person name="Kamiya A."/>
            <person name="Meyers C."/>
            <person name="Nakajima M."/>
            <person name="Narusaka M."/>
            <person name="Seki M."/>
            <person name="Sakurai T."/>
            <person name="Satou M."/>
            <person name="Tamse R."/>
            <person name="Vaysberg M."/>
            <person name="Wallender E.K."/>
            <person name="Wong C."/>
            <person name="Yamamura Y."/>
            <person name="Yuan S."/>
            <person name="Shinozaki K."/>
            <person name="Davis R.W."/>
            <person name="Theologis A."/>
            <person name="Ecker J.R."/>
        </authorList>
    </citation>
    <scope>NUCLEOTIDE SEQUENCE [LARGE SCALE MRNA]</scope>
    <source>
        <strain>cv. Columbia</strain>
    </source>
</reference>
<reference key="4">
    <citation type="submission" date="2002-03" db="EMBL/GenBank/DDBJ databases">
        <title>Full-length cDNA from Arabidopsis thaliana.</title>
        <authorList>
            <person name="Brover V.V."/>
            <person name="Troukhan M.E."/>
            <person name="Alexandrov N.A."/>
            <person name="Lu Y.-P."/>
            <person name="Flavell R.B."/>
            <person name="Feldmann K.A."/>
        </authorList>
    </citation>
    <scope>NUCLEOTIDE SEQUENCE [LARGE SCALE MRNA]</scope>
</reference>
<keyword id="KW-0880">Kelch repeat</keyword>
<keyword id="KW-1185">Reference proteome</keyword>
<keyword id="KW-0677">Repeat</keyword>
<sequence length="394" mass="43879">MEKKKNNNNGGDFGEEESSIDGDILESILSYLPLLDLDSACQVSKSWNRAVFYSLRRLKTMPWLFVYNQRNSPPYTMATMAMAYDPKSEAWIELNTASSPVEHVSVARSSHSTLLYALSPARFSFSTDAFHLTWQHVAPPRVWRIDPIVAVVGRSLIIAGGVCDFEEDRFAVELFDIESGDGAWERCESMPDFLYESASSTWLSVAVSSEKMYVTEKRSGVTCSFNPVTRSWTKLLDLCPGECSLYSRSIGFSVNRLIMAGIIGDEYNPTGIELWEVIDSDESHLKFESIGSMPETYLEKLRGINSDWPLTSIVLNAVGDMVYVHGAAENGGEIVAAEIEGGKLCKWRTLPNADATWKKSHAAERVIVACSNVGFSDLKLAFRNNLSFLSTSKY</sequence>